<keyword id="KW-0030">Aminoacyl-tRNA synthetase</keyword>
<keyword id="KW-0067">ATP-binding</keyword>
<keyword id="KW-0963">Cytoplasm</keyword>
<keyword id="KW-0436">Ligase</keyword>
<keyword id="KW-0547">Nucleotide-binding</keyword>
<keyword id="KW-0648">Protein biosynthesis</keyword>
<evidence type="ECO:0000255" key="1">
    <source>
        <dbReference type="HAMAP-Rule" id="MF_00176"/>
    </source>
</evidence>
<reference key="1">
    <citation type="submission" date="2006-12" db="EMBL/GenBank/DDBJ databases">
        <title>Complete sequence of Acidovorax avenae subsp. citrulli AAC00-1.</title>
        <authorList>
            <person name="Copeland A."/>
            <person name="Lucas S."/>
            <person name="Lapidus A."/>
            <person name="Barry K."/>
            <person name="Detter J.C."/>
            <person name="Glavina del Rio T."/>
            <person name="Dalin E."/>
            <person name="Tice H."/>
            <person name="Pitluck S."/>
            <person name="Kiss H."/>
            <person name="Brettin T."/>
            <person name="Bruce D."/>
            <person name="Han C."/>
            <person name="Tapia R."/>
            <person name="Gilna P."/>
            <person name="Schmutz J."/>
            <person name="Larimer F."/>
            <person name="Land M."/>
            <person name="Hauser L."/>
            <person name="Kyrpides N."/>
            <person name="Kim E."/>
            <person name="Stahl D."/>
            <person name="Richardson P."/>
        </authorList>
    </citation>
    <scope>NUCLEOTIDE SEQUENCE [LARGE SCALE GENOMIC DNA]</scope>
    <source>
        <strain>AAC00-1</strain>
    </source>
</reference>
<name>SYS_PARC0</name>
<dbReference type="EC" id="6.1.1.11" evidence="1"/>
<dbReference type="EMBL" id="CP000512">
    <property type="protein sequence ID" value="ABM34314.1"/>
    <property type="molecule type" value="Genomic_DNA"/>
</dbReference>
<dbReference type="RefSeq" id="WP_011796805.1">
    <property type="nucleotide sequence ID" value="NC_008752.1"/>
</dbReference>
<dbReference type="SMR" id="A1TTM6"/>
<dbReference type="STRING" id="397945.Aave_3767"/>
<dbReference type="GeneID" id="79791337"/>
<dbReference type="KEGG" id="aav:Aave_3767"/>
<dbReference type="eggNOG" id="COG0172">
    <property type="taxonomic scope" value="Bacteria"/>
</dbReference>
<dbReference type="HOGENOM" id="CLU_023797_1_1_4"/>
<dbReference type="OrthoDB" id="9804647at2"/>
<dbReference type="UniPathway" id="UPA00906">
    <property type="reaction ID" value="UER00895"/>
</dbReference>
<dbReference type="Proteomes" id="UP000002596">
    <property type="component" value="Chromosome"/>
</dbReference>
<dbReference type="GO" id="GO:0005737">
    <property type="term" value="C:cytoplasm"/>
    <property type="evidence" value="ECO:0007669"/>
    <property type="project" value="UniProtKB-SubCell"/>
</dbReference>
<dbReference type="GO" id="GO:0005524">
    <property type="term" value="F:ATP binding"/>
    <property type="evidence" value="ECO:0007669"/>
    <property type="project" value="UniProtKB-UniRule"/>
</dbReference>
<dbReference type="GO" id="GO:0004828">
    <property type="term" value="F:serine-tRNA ligase activity"/>
    <property type="evidence" value="ECO:0007669"/>
    <property type="project" value="UniProtKB-UniRule"/>
</dbReference>
<dbReference type="GO" id="GO:0016260">
    <property type="term" value="P:selenocysteine biosynthetic process"/>
    <property type="evidence" value="ECO:0007669"/>
    <property type="project" value="UniProtKB-UniRule"/>
</dbReference>
<dbReference type="GO" id="GO:0006434">
    <property type="term" value="P:seryl-tRNA aminoacylation"/>
    <property type="evidence" value="ECO:0007669"/>
    <property type="project" value="UniProtKB-UniRule"/>
</dbReference>
<dbReference type="CDD" id="cd00770">
    <property type="entry name" value="SerRS_core"/>
    <property type="match status" value="1"/>
</dbReference>
<dbReference type="Gene3D" id="3.30.930.10">
    <property type="entry name" value="Bira Bifunctional Protein, Domain 2"/>
    <property type="match status" value="1"/>
</dbReference>
<dbReference type="Gene3D" id="1.10.287.40">
    <property type="entry name" value="Serine-tRNA synthetase, tRNA binding domain"/>
    <property type="match status" value="1"/>
</dbReference>
<dbReference type="HAMAP" id="MF_00176">
    <property type="entry name" value="Ser_tRNA_synth_type1"/>
    <property type="match status" value="1"/>
</dbReference>
<dbReference type="InterPro" id="IPR002314">
    <property type="entry name" value="aa-tRNA-synt_IIb"/>
</dbReference>
<dbReference type="InterPro" id="IPR006195">
    <property type="entry name" value="aa-tRNA-synth_II"/>
</dbReference>
<dbReference type="InterPro" id="IPR045864">
    <property type="entry name" value="aa-tRNA-synth_II/BPL/LPL"/>
</dbReference>
<dbReference type="InterPro" id="IPR002317">
    <property type="entry name" value="Ser-tRNA-ligase_type_1"/>
</dbReference>
<dbReference type="InterPro" id="IPR015866">
    <property type="entry name" value="Ser-tRNA-synth_1_N"/>
</dbReference>
<dbReference type="InterPro" id="IPR042103">
    <property type="entry name" value="SerRS_1_N_sf"/>
</dbReference>
<dbReference type="InterPro" id="IPR033729">
    <property type="entry name" value="SerRS_core"/>
</dbReference>
<dbReference type="InterPro" id="IPR010978">
    <property type="entry name" value="tRNA-bd_arm"/>
</dbReference>
<dbReference type="NCBIfam" id="TIGR00414">
    <property type="entry name" value="serS"/>
    <property type="match status" value="1"/>
</dbReference>
<dbReference type="PANTHER" id="PTHR43697:SF1">
    <property type="entry name" value="SERINE--TRNA LIGASE"/>
    <property type="match status" value="1"/>
</dbReference>
<dbReference type="PANTHER" id="PTHR43697">
    <property type="entry name" value="SERYL-TRNA SYNTHETASE"/>
    <property type="match status" value="1"/>
</dbReference>
<dbReference type="Pfam" id="PF02403">
    <property type="entry name" value="Seryl_tRNA_N"/>
    <property type="match status" value="1"/>
</dbReference>
<dbReference type="Pfam" id="PF00587">
    <property type="entry name" value="tRNA-synt_2b"/>
    <property type="match status" value="1"/>
</dbReference>
<dbReference type="PIRSF" id="PIRSF001529">
    <property type="entry name" value="Ser-tRNA-synth_IIa"/>
    <property type="match status" value="1"/>
</dbReference>
<dbReference type="PRINTS" id="PR00981">
    <property type="entry name" value="TRNASYNTHSER"/>
</dbReference>
<dbReference type="SUPFAM" id="SSF55681">
    <property type="entry name" value="Class II aaRS and biotin synthetases"/>
    <property type="match status" value="1"/>
</dbReference>
<dbReference type="SUPFAM" id="SSF46589">
    <property type="entry name" value="tRNA-binding arm"/>
    <property type="match status" value="1"/>
</dbReference>
<dbReference type="PROSITE" id="PS50862">
    <property type="entry name" value="AA_TRNA_LIGASE_II"/>
    <property type="match status" value="1"/>
</dbReference>
<feature type="chain" id="PRO_1000019599" description="Serine--tRNA ligase">
    <location>
        <begin position="1"/>
        <end position="439"/>
    </location>
</feature>
<feature type="binding site" evidence="1">
    <location>
        <begin position="247"/>
        <end position="249"/>
    </location>
    <ligand>
        <name>L-serine</name>
        <dbReference type="ChEBI" id="CHEBI:33384"/>
    </ligand>
</feature>
<feature type="binding site" evidence="1">
    <location>
        <begin position="278"/>
        <end position="280"/>
    </location>
    <ligand>
        <name>ATP</name>
        <dbReference type="ChEBI" id="CHEBI:30616"/>
    </ligand>
</feature>
<feature type="binding site" evidence="1">
    <location>
        <position position="301"/>
    </location>
    <ligand>
        <name>L-serine</name>
        <dbReference type="ChEBI" id="CHEBI:33384"/>
    </ligand>
</feature>
<feature type="binding site" evidence="1">
    <location>
        <begin position="365"/>
        <end position="368"/>
    </location>
    <ligand>
        <name>ATP</name>
        <dbReference type="ChEBI" id="CHEBI:30616"/>
    </ligand>
</feature>
<feature type="binding site" evidence="1">
    <location>
        <position position="400"/>
    </location>
    <ligand>
        <name>L-serine</name>
        <dbReference type="ChEBI" id="CHEBI:33384"/>
    </ligand>
</feature>
<gene>
    <name evidence="1" type="primary">serS</name>
    <name type="ordered locus">Aave_3767</name>
</gene>
<protein>
    <recommendedName>
        <fullName evidence="1">Serine--tRNA ligase</fullName>
        <ecNumber evidence="1">6.1.1.11</ecNumber>
    </recommendedName>
    <alternativeName>
        <fullName evidence="1">Seryl-tRNA synthetase</fullName>
        <shortName evidence="1">SerRS</shortName>
    </alternativeName>
    <alternativeName>
        <fullName evidence="1">Seryl-tRNA(Ser/Sec) synthetase</fullName>
    </alternativeName>
</protein>
<comment type="function">
    <text evidence="1">Catalyzes the attachment of serine to tRNA(Ser). Is also able to aminoacylate tRNA(Sec) with serine, to form the misacylated tRNA L-seryl-tRNA(Sec), which will be further converted into selenocysteinyl-tRNA(Sec).</text>
</comment>
<comment type="catalytic activity">
    <reaction evidence="1">
        <text>tRNA(Ser) + L-serine + ATP = L-seryl-tRNA(Ser) + AMP + diphosphate + H(+)</text>
        <dbReference type="Rhea" id="RHEA:12292"/>
        <dbReference type="Rhea" id="RHEA-COMP:9669"/>
        <dbReference type="Rhea" id="RHEA-COMP:9703"/>
        <dbReference type="ChEBI" id="CHEBI:15378"/>
        <dbReference type="ChEBI" id="CHEBI:30616"/>
        <dbReference type="ChEBI" id="CHEBI:33019"/>
        <dbReference type="ChEBI" id="CHEBI:33384"/>
        <dbReference type="ChEBI" id="CHEBI:78442"/>
        <dbReference type="ChEBI" id="CHEBI:78533"/>
        <dbReference type="ChEBI" id="CHEBI:456215"/>
        <dbReference type="EC" id="6.1.1.11"/>
    </reaction>
</comment>
<comment type="catalytic activity">
    <reaction evidence="1">
        <text>tRNA(Sec) + L-serine + ATP = L-seryl-tRNA(Sec) + AMP + diphosphate + H(+)</text>
        <dbReference type="Rhea" id="RHEA:42580"/>
        <dbReference type="Rhea" id="RHEA-COMP:9742"/>
        <dbReference type="Rhea" id="RHEA-COMP:10128"/>
        <dbReference type="ChEBI" id="CHEBI:15378"/>
        <dbReference type="ChEBI" id="CHEBI:30616"/>
        <dbReference type="ChEBI" id="CHEBI:33019"/>
        <dbReference type="ChEBI" id="CHEBI:33384"/>
        <dbReference type="ChEBI" id="CHEBI:78442"/>
        <dbReference type="ChEBI" id="CHEBI:78533"/>
        <dbReference type="ChEBI" id="CHEBI:456215"/>
        <dbReference type="EC" id="6.1.1.11"/>
    </reaction>
</comment>
<comment type="pathway">
    <text evidence="1">Aminoacyl-tRNA biosynthesis; selenocysteinyl-tRNA(Sec) biosynthesis; L-seryl-tRNA(Sec) from L-serine and tRNA(Sec): step 1/1.</text>
</comment>
<comment type="subunit">
    <text evidence="1">Homodimer. The tRNA molecule binds across the dimer.</text>
</comment>
<comment type="subcellular location">
    <subcellularLocation>
        <location evidence="1">Cytoplasm</location>
    </subcellularLocation>
</comment>
<comment type="domain">
    <text evidence="1">Consists of two distinct domains, a catalytic core and a N-terminal extension that is involved in tRNA binding.</text>
</comment>
<comment type="similarity">
    <text evidence="1">Belongs to the class-II aminoacyl-tRNA synthetase family. Type-1 seryl-tRNA synthetase subfamily.</text>
</comment>
<organism>
    <name type="scientific">Paracidovorax citrulli (strain AAC00-1)</name>
    <name type="common">Acidovorax citrulli</name>
    <dbReference type="NCBI Taxonomy" id="397945"/>
    <lineage>
        <taxon>Bacteria</taxon>
        <taxon>Pseudomonadati</taxon>
        <taxon>Pseudomonadota</taxon>
        <taxon>Betaproteobacteria</taxon>
        <taxon>Burkholderiales</taxon>
        <taxon>Comamonadaceae</taxon>
        <taxon>Paracidovorax</taxon>
    </lineage>
</organism>
<accession>A1TTM6</accession>
<proteinExistence type="inferred from homology"/>
<sequence>MLDILLLRKDLDSAIARLETRKKPQAFLQVEAFQSLESERKTLQTRTEELQSRRNQLSKQVGQLKARGENADAVMAEVGGLKAELENSAARLEQIQAELHTLLVAVPNLPHESVPVGSDESGNVEVRRWSPDGQDPKPLGFPAKDHVDLGEPLGLDFDMGVKLSGSRFTVMKGPIARLHRALAQFMLDVQTREHGYTECYVPYVVNADSLRGTGQLPKFEGDLFAAKKGGQDGEPVPDNAALYLIPTSEVPLTNFVRDQVVPESELPIRLTAHTPCFRSEAGSYGRDTRGMIRQHQFDKVEMVQITHPDRSYEALEEMTGHAEAVLQKLGLPYRVMSLCTGDMGFGAAKTYDLEVWLPAQNTYREISSVSNCEAFQARRLQARFKNAQGKNELVHTLNGSGLAVGRTLVAVLENYQQADGSVAVPEALRPYLGGDSVLR</sequence>